<name>NIPA3_HUMAN</name>
<feature type="chain" id="PRO_0000242146" description="Magnesium transporter NIPA3">
    <location>
        <begin position="1"/>
        <end position="410"/>
    </location>
</feature>
<feature type="topological domain" description="Extracellular" evidence="2">
    <location>
        <begin position="1"/>
        <end position="67"/>
    </location>
</feature>
<feature type="transmembrane region" description="Helical" evidence="2">
    <location>
        <begin position="68"/>
        <end position="88"/>
    </location>
</feature>
<feature type="topological domain" description="Cytoplasmic" evidence="2">
    <location>
        <begin position="89"/>
        <end position="114"/>
    </location>
</feature>
<feature type="transmembrane region" description="Helical" evidence="2">
    <location>
        <begin position="115"/>
        <end position="135"/>
    </location>
</feature>
<feature type="topological domain" description="Extracellular" evidence="2">
    <location>
        <position position="136"/>
    </location>
</feature>
<feature type="transmembrane region" description="Helical" evidence="2">
    <location>
        <begin position="137"/>
        <end position="157"/>
    </location>
</feature>
<feature type="topological domain" description="Cytoplasmic" evidence="2">
    <location>
        <begin position="158"/>
        <end position="165"/>
    </location>
</feature>
<feature type="transmembrane region" description="Helical" evidence="2">
    <location>
        <begin position="166"/>
        <end position="186"/>
    </location>
</feature>
<feature type="topological domain" description="Extracellular" evidence="2">
    <location>
        <begin position="187"/>
        <end position="207"/>
    </location>
</feature>
<feature type="transmembrane region" description="Helical" evidence="2">
    <location>
        <begin position="208"/>
        <end position="228"/>
    </location>
</feature>
<feature type="topological domain" description="Cytoplasmic" evidence="2">
    <location>
        <begin position="229"/>
        <end position="233"/>
    </location>
</feature>
<feature type="transmembrane region" description="Helical" evidence="2">
    <location>
        <begin position="234"/>
        <end position="254"/>
    </location>
</feature>
<feature type="topological domain" description="Extracellular" evidence="2">
    <location>
        <begin position="255"/>
        <end position="273"/>
    </location>
</feature>
<feature type="transmembrane region" description="Helical" evidence="2">
    <location>
        <begin position="274"/>
        <end position="294"/>
    </location>
</feature>
<feature type="topological domain" description="Cytoplasmic" evidence="2">
    <location>
        <begin position="295"/>
        <end position="305"/>
    </location>
</feature>
<feature type="transmembrane region" description="Helical" evidence="2">
    <location>
        <begin position="306"/>
        <end position="326"/>
    </location>
</feature>
<feature type="topological domain" description="Extracellular" evidence="2">
    <location>
        <begin position="327"/>
        <end position="336"/>
    </location>
</feature>
<feature type="transmembrane region" description="Helical" evidence="2">
    <location>
        <begin position="337"/>
        <end position="357"/>
    </location>
</feature>
<feature type="topological domain" description="Cytoplasmic" evidence="2">
    <location>
        <begin position="358"/>
        <end position="410"/>
    </location>
</feature>
<feature type="glycosylation site" description="N-linked (GlcNAc...) asparagine" evidence="2">
    <location>
        <position position="25"/>
    </location>
</feature>
<feature type="glycosylation site" description="N-linked (GlcNAc...) asparagine" evidence="2">
    <location>
        <position position="35"/>
    </location>
</feature>
<feature type="glycosylation site" description="N-linked (GlcNAc...) asparagine" evidence="2">
    <location>
        <position position="50"/>
    </location>
</feature>
<feature type="glycosylation site" description="N-linked (GlcNAc...) asparagine" evidence="2">
    <location>
        <position position="55"/>
    </location>
</feature>
<feature type="sequence variant" id="VAR_026843" description="In dbSNP:rs13116684.">
    <original>I</original>
    <variation>V</variation>
    <location>
        <position position="324"/>
    </location>
</feature>
<feature type="sequence conflict" description="In Ref. 2; CAH18311." evidence="4" ref="2">
    <original>E</original>
    <variation>G</variation>
    <location>
        <position position="201"/>
    </location>
</feature>
<comment type="function">
    <text evidence="1">Acts as a Mg(2+) transporter. Can also transport other divalent cations such as Fe(2+), Sr(2+), Ba(2+), Mn(2+), Cu(2+) and Co(2+) but to a much less extent than Mg(2+) (By similarity).</text>
</comment>
<comment type="catalytic activity">
    <reaction evidence="1">
        <text>Mg(2+)(in) = Mg(2+)(out)</text>
        <dbReference type="Rhea" id="RHEA:29827"/>
        <dbReference type="ChEBI" id="CHEBI:18420"/>
    </reaction>
</comment>
<comment type="subcellular location">
    <subcellularLocation>
        <location evidence="1">Golgi apparatus membrane</location>
        <topology evidence="2">Multi-pass membrane protein</topology>
    </subcellularLocation>
</comment>
<comment type="tissue specificity">
    <text evidence="3">Expressed in the pancreatic islets.</text>
</comment>
<comment type="similarity">
    <text evidence="4">Belongs to the NIPA family.</text>
</comment>
<keyword id="KW-0325">Glycoprotein</keyword>
<keyword id="KW-0333">Golgi apparatus</keyword>
<keyword id="KW-0406">Ion transport</keyword>
<keyword id="KW-0460">Magnesium</keyword>
<keyword id="KW-0472">Membrane</keyword>
<keyword id="KW-1267">Proteomics identification</keyword>
<keyword id="KW-1185">Reference proteome</keyword>
<keyword id="KW-0812">Transmembrane</keyword>
<keyword id="KW-1133">Transmembrane helix</keyword>
<keyword id="KW-0813">Transport</keyword>
<organism>
    <name type="scientific">Homo sapiens</name>
    <name type="common">Human</name>
    <dbReference type="NCBI Taxonomy" id="9606"/>
    <lineage>
        <taxon>Eukaryota</taxon>
        <taxon>Metazoa</taxon>
        <taxon>Chordata</taxon>
        <taxon>Craniata</taxon>
        <taxon>Vertebrata</taxon>
        <taxon>Euteleostomi</taxon>
        <taxon>Mammalia</taxon>
        <taxon>Eutheria</taxon>
        <taxon>Euarchontoglires</taxon>
        <taxon>Primates</taxon>
        <taxon>Haplorrhini</taxon>
        <taxon>Catarrhini</taxon>
        <taxon>Hominidae</taxon>
        <taxon>Homo</taxon>
    </lineage>
</organism>
<accession>Q6NVV3</accession>
<accession>B3KTB0</accession>
<accession>Q68DA9</accession>
<sequence length="410" mass="44638">MGAQVRLPPGEPCREGYVLSLVCPNSSQAWCEITNVSQLLASPVLYTDLNYSINNLSISANVENKYSLYVGLVLAVSSSIFIGSSFILKKKGLLQLASKGFTRAGQGGHSYLKEWLWWVGLLSMGAGEAANFAAYAFAPATLVTPLGALSVLISAILSSYFLNEHLNIHGKIGCILSILGSTVMVIHAPQEEEVTSLHEMEMKLRDPGFISFAVIITVISLVLILIVAPKKGQTNILVYISICSLIGAFSVSSVKGLGIAIKELIEWKPVYKHPLVFVLLAVLVLSVTTQINYLNKALDTFNTSLVTPIYYVFFTSMVVTCSAILFQEWYGMTAGDIIGTLSGFFTIIIGIFLLHAFKNTDITWSELTSTAKKEAVSLNVNENNYVLLENLECSAPGYNDDVTLFSRTDD</sequence>
<gene>
    <name type="primary">NIPAL1</name>
    <name type="synonym">NIPA3</name>
    <name type="synonym">NPAL1</name>
</gene>
<protein>
    <recommendedName>
        <fullName>Magnesium transporter NIPA3</fullName>
    </recommendedName>
    <alternativeName>
        <fullName>NIPA-like protein 1</fullName>
    </alternativeName>
    <alternativeName>
        <fullName>Non-imprinted in Prader-Willi/Angelman syndrome region protein 3</fullName>
    </alternativeName>
</protein>
<dbReference type="EMBL" id="AK095299">
    <property type="protein sequence ID" value="BAG53022.1"/>
    <property type="molecule type" value="mRNA"/>
</dbReference>
<dbReference type="EMBL" id="CR749484">
    <property type="protein sequence ID" value="CAH18311.1"/>
    <property type="molecule type" value="mRNA"/>
</dbReference>
<dbReference type="EMBL" id="BC067881">
    <property type="protein sequence ID" value="AAH67881.1"/>
    <property type="molecule type" value="mRNA"/>
</dbReference>
<dbReference type="CCDS" id="CCDS3479.1"/>
<dbReference type="RefSeq" id="NP_997213.1">
    <property type="nucleotide sequence ID" value="NM_207330.3"/>
</dbReference>
<dbReference type="BioGRID" id="127450">
    <property type="interactions" value="118"/>
</dbReference>
<dbReference type="FunCoup" id="Q6NVV3">
    <property type="interactions" value="137"/>
</dbReference>
<dbReference type="IntAct" id="Q6NVV3">
    <property type="interactions" value="113"/>
</dbReference>
<dbReference type="STRING" id="9606.ENSP00000295461"/>
<dbReference type="GlyCosmos" id="Q6NVV3">
    <property type="glycosylation" value="4 sites, No reported glycans"/>
</dbReference>
<dbReference type="GlyGen" id="Q6NVV3">
    <property type="glycosylation" value="4 sites"/>
</dbReference>
<dbReference type="iPTMnet" id="Q6NVV3"/>
<dbReference type="PhosphoSitePlus" id="Q6NVV3"/>
<dbReference type="BioMuta" id="NIPAL1"/>
<dbReference type="DMDM" id="74736867"/>
<dbReference type="jPOST" id="Q6NVV3"/>
<dbReference type="MassIVE" id="Q6NVV3"/>
<dbReference type="PaxDb" id="9606-ENSP00000295461"/>
<dbReference type="PeptideAtlas" id="Q6NVV3"/>
<dbReference type="ProteomicsDB" id="66724"/>
<dbReference type="Antibodypedia" id="52126">
    <property type="antibodies" value="61 antibodies from 13 providers"/>
</dbReference>
<dbReference type="DNASU" id="152519"/>
<dbReference type="Ensembl" id="ENST00000295461.10">
    <property type="protein sequence ID" value="ENSP00000295461.5"/>
    <property type="gene ID" value="ENSG00000163293.12"/>
</dbReference>
<dbReference type="GeneID" id="152519"/>
<dbReference type="KEGG" id="hsa:152519"/>
<dbReference type="MANE-Select" id="ENST00000295461.10">
    <property type="protein sequence ID" value="ENSP00000295461.5"/>
    <property type="RefSeq nucleotide sequence ID" value="NM_207330.3"/>
    <property type="RefSeq protein sequence ID" value="NP_997213.1"/>
</dbReference>
<dbReference type="UCSC" id="uc003gxw.4">
    <property type="organism name" value="human"/>
</dbReference>
<dbReference type="AGR" id="HGNC:27194"/>
<dbReference type="CTD" id="152519"/>
<dbReference type="DisGeNET" id="152519"/>
<dbReference type="GeneCards" id="NIPAL1"/>
<dbReference type="HGNC" id="HGNC:27194">
    <property type="gene designation" value="NIPAL1"/>
</dbReference>
<dbReference type="HPA" id="ENSG00000163293">
    <property type="expression patterns" value="Tissue enhanced (esophagus, skin)"/>
</dbReference>
<dbReference type="MIM" id="620340">
    <property type="type" value="gene"/>
</dbReference>
<dbReference type="neXtProt" id="NX_Q6NVV3"/>
<dbReference type="OpenTargets" id="ENSG00000163293"/>
<dbReference type="PharmGKB" id="PA164723925"/>
<dbReference type="VEuPathDB" id="HostDB:ENSG00000163293"/>
<dbReference type="eggNOG" id="KOG2922">
    <property type="taxonomic scope" value="Eukaryota"/>
</dbReference>
<dbReference type="GeneTree" id="ENSGT00940000160022"/>
<dbReference type="HOGENOM" id="CLU_012349_1_3_1"/>
<dbReference type="InParanoid" id="Q6NVV3"/>
<dbReference type="OMA" id="STWMPWF"/>
<dbReference type="OrthoDB" id="6428174at2759"/>
<dbReference type="PAN-GO" id="Q6NVV3">
    <property type="GO annotations" value="2 GO annotations based on evolutionary models"/>
</dbReference>
<dbReference type="PhylomeDB" id="Q6NVV3"/>
<dbReference type="TreeFam" id="TF313214"/>
<dbReference type="PathwayCommons" id="Q6NVV3"/>
<dbReference type="Reactome" id="R-HSA-5223345">
    <property type="pathway name" value="Miscellaneous transport and binding events"/>
</dbReference>
<dbReference type="BioGRID-ORCS" id="152519">
    <property type="hits" value="7 hits in 1135 CRISPR screens"/>
</dbReference>
<dbReference type="ChiTaRS" id="NIPAL1">
    <property type="organism name" value="human"/>
</dbReference>
<dbReference type="GenomeRNAi" id="152519"/>
<dbReference type="Pharos" id="Q6NVV3">
    <property type="development level" value="Tdark"/>
</dbReference>
<dbReference type="PRO" id="PR:Q6NVV3"/>
<dbReference type="Proteomes" id="UP000005640">
    <property type="component" value="Chromosome 4"/>
</dbReference>
<dbReference type="RNAct" id="Q6NVV3">
    <property type="molecule type" value="protein"/>
</dbReference>
<dbReference type="Bgee" id="ENSG00000163293">
    <property type="expression patterns" value="Expressed in buccal mucosa cell and 136 other cell types or tissues"/>
</dbReference>
<dbReference type="ExpressionAtlas" id="Q6NVV3">
    <property type="expression patterns" value="baseline and differential"/>
</dbReference>
<dbReference type="GO" id="GO:0005794">
    <property type="term" value="C:Golgi apparatus"/>
    <property type="evidence" value="ECO:0000250"/>
    <property type="project" value="UniProtKB"/>
</dbReference>
<dbReference type="GO" id="GO:0000139">
    <property type="term" value="C:Golgi membrane"/>
    <property type="evidence" value="ECO:0007669"/>
    <property type="project" value="UniProtKB-SubCell"/>
</dbReference>
<dbReference type="GO" id="GO:0016020">
    <property type="term" value="C:membrane"/>
    <property type="evidence" value="ECO:0000318"/>
    <property type="project" value="GO_Central"/>
</dbReference>
<dbReference type="GO" id="GO:0015095">
    <property type="term" value="F:magnesium ion transmembrane transporter activity"/>
    <property type="evidence" value="ECO:0007669"/>
    <property type="project" value="InterPro"/>
</dbReference>
<dbReference type="GO" id="GO:0015693">
    <property type="term" value="P:magnesium ion transport"/>
    <property type="evidence" value="ECO:0000318"/>
    <property type="project" value="GO_Central"/>
</dbReference>
<dbReference type="InterPro" id="IPR008521">
    <property type="entry name" value="Mg_trans_NIPA"/>
</dbReference>
<dbReference type="PANTHER" id="PTHR12570">
    <property type="match status" value="1"/>
</dbReference>
<dbReference type="PANTHER" id="PTHR12570:SF13">
    <property type="entry name" value="MAGNESIUM TRANSPORTER NIPA3"/>
    <property type="match status" value="1"/>
</dbReference>
<dbReference type="Pfam" id="PF05653">
    <property type="entry name" value="Mg_trans_NIPA"/>
    <property type="match status" value="1"/>
</dbReference>
<dbReference type="SUPFAM" id="SSF103481">
    <property type="entry name" value="Multidrug resistance efflux transporter EmrE"/>
    <property type="match status" value="1"/>
</dbReference>
<evidence type="ECO:0000250" key="1">
    <source>
        <dbReference type="UniProtKB" id="Q8BMW7"/>
    </source>
</evidence>
<evidence type="ECO:0000255" key="2"/>
<evidence type="ECO:0000269" key="3">
    <source>
    </source>
</evidence>
<evidence type="ECO:0000305" key="4"/>
<proteinExistence type="evidence at protein level"/>
<reference key="1">
    <citation type="journal article" date="2004" name="Nat. Genet.">
        <title>Complete sequencing and characterization of 21,243 full-length human cDNAs.</title>
        <authorList>
            <person name="Ota T."/>
            <person name="Suzuki Y."/>
            <person name="Nishikawa T."/>
            <person name="Otsuki T."/>
            <person name="Sugiyama T."/>
            <person name="Irie R."/>
            <person name="Wakamatsu A."/>
            <person name="Hayashi K."/>
            <person name="Sato H."/>
            <person name="Nagai K."/>
            <person name="Kimura K."/>
            <person name="Makita H."/>
            <person name="Sekine M."/>
            <person name="Obayashi M."/>
            <person name="Nishi T."/>
            <person name="Shibahara T."/>
            <person name="Tanaka T."/>
            <person name="Ishii S."/>
            <person name="Yamamoto J."/>
            <person name="Saito K."/>
            <person name="Kawai Y."/>
            <person name="Isono Y."/>
            <person name="Nakamura Y."/>
            <person name="Nagahari K."/>
            <person name="Murakami K."/>
            <person name="Yasuda T."/>
            <person name="Iwayanagi T."/>
            <person name="Wagatsuma M."/>
            <person name="Shiratori A."/>
            <person name="Sudo H."/>
            <person name="Hosoiri T."/>
            <person name="Kaku Y."/>
            <person name="Kodaira H."/>
            <person name="Kondo H."/>
            <person name="Sugawara M."/>
            <person name="Takahashi M."/>
            <person name="Kanda K."/>
            <person name="Yokoi T."/>
            <person name="Furuya T."/>
            <person name="Kikkawa E."/>
            <person name="Omura Y."/>
            <person name="Abe K."/>
            <person name="Kamihara K."/>
            <person name="Katsuta N."/>
            <person name="Sato K."/>
            <person name="Tanikawa M."/>
            <person name="Yamazaki M."/>
            <person name="Ninomiya K."/>
            <person name="Ishibashi T."/>
            <person name="Yamashita H."/>
            <person name="Murakawa K."/>
            <person name="Fujimori K."/>
            <person name="Tanai H."/>
            <person name="Kimata M."/>
            <person name="Watanabe M."/>
            <person name="Hiraoka S."/>
            <person name="Chiba Y."/>
            <person name="Ishida S."/>
            <person name="Ono Y."/>
            <person name="Takiguchi S."/>
            <person name="Watanabe S."/>
            <person name="Yosida M."/>
            <person name="Hotuta T."/>
            <person name="Kusano J."/>
            <person name="Kanehori K."/>
            <person name="Takahashi-Fujii A."/>
            <person name="Hara H."/>
            <person name="Tanase T.-O."/>
            <person name="Nomura Y."/>
            <person name="Togiya S."/>
            <person name="Komai F."/>
            <person name="Hara R."/>
            <person name="Takeuchi K."/>
            <person name="Arita M."/>
            <person name="Imose N."/>
            <person name="Musashino K."/>
            <person name="Yuuki H."/>
            <person name="Oshima A."/>
            <person name="Sasaki N."/>
            <person name="Aotsuka S."/>
            <person name="Yoshikawa Y."/>
            <person name="Matsunawa H."/>
            <person name="Ichihara T."/>
            <person name="Shiohata N."/>
            <person name="Sano S."/>
            <person name="Moriya S."/>
            <person name="Momiyama H."/>
            <person name="Satoh N."/>
            <person name="Takami S."/>
            <person name="Terashima Y."/>
            <person name="Suzuki O."/>
            <person name="Nakagawa S."/>
            <person name="Senoh A."/>
            <person name="Mizoguchi H."/>
            <person name="Goto Y."/>
            <person name="Shimizu F."/>
            <person name="Wakebe H."/>
            <person name="Hishigaki H."/>
            <person name="Watanabe T."/>
            <person name="Sugiyama A."/>
            <person name="Takemoto M."/>
            <person name="Kawakami B."/>
            <person name="Yamazaki M."/>
            <person name="Watanabe K."/>
            <person name="Kumagai A."/>
            <person name="Itakura S."/>
            <person name="Fukuzumi Y."/>
            <person name="Fujimori Y."/>
            <person name="Komiyama M."/>
            <person name="Tashiro H."/>
            <person name="Tanigami A."/>
            <person name="Fujiwara T."/>
            <person name="Ono T."/>
            <person name="Yamada K."/>
            <person name="Fujii Y."/>
            <person name="Ozaki K."/>
            <person name="Hirao M."/>
            <person name="Ohmori Y."/>
            <person name="Kawabata A."/>
            <person name="Hikiji T."/>
            <person name="Kobatake N."/>
            <person name="Inagaki H."/>
            <person name="Ikema Y."/>
            <person name="Okamoto S."/>
            <person name="Okitani R."/>
            <person name="Kawakami T."/>
            <person name="Noguchi S."/>
            <person name="Itoh T."/>
            <person name="Shigeta K."/>
            <person name="Senba T."/>
            <person name="Matsumura K."/>
            <person name="Nakajima Y."/>
            <person name="Mizuno T."/>
            <person name="Morinaga M."/>
            <person name="Sasaki M."/>
            <person name="Togashi T."/>
            <person name="Oyama M."/>
            <person name="Hata H."/>
            <person name="Watanabe M."/>
            <person name="Komatsu T."/>
            <person name="Mizushima-Sugano J."/>
            <person name="Satoh T."/>
            <person name="Shirai Y."/>
            <person name="Takahashi Y."/>
            <person name="Nakagawa K."/>
            <person name="Okumura K."/>
            <person name="Nagase T."/>
            <person name="Nomura N."/>
            <person name="Kikuchi H."/>
            <person name="Masuho Y."/>
            <person name="Yamashita R."/>
            <person name="Nakai K."/>
            <person name="Yada T."/>
            <person name="Nakamura Y."/>
            <person name="Ohara O."/>
            <person name="Isogai T."/>
            <person name="Sugano S."/>
        </authorList>
    </citation>
    <scope>NUCLEOTIDE SEQUENCE [LARGE SCALE MRNA]</scope>
    <source>
        <tissue>Tongue</tissue>
    </source>
</reference>
<reference key="2">
    <citation type="journal article" date="2007" name="BMC Genomics">
        <title>The full-ORF clone resource of the German cDNA consortium.</title>
        <authorList>
            <person name="Bechtel S."/>
            <person name="Rosenfelder H."/>
            <person name="Duda A."/>
            <person name="Schmidt C.P."/>
            <person name="Ernst U."/>
            <person name="Wellenreuther R."/>
            <person name="Mehrle A."/>
            <person name="Schuster C."/>
            <person name="Bahr A."/>
            <person name="Bloecker H."/>
            <person name="Heubner D."/>
            <person name="Hoerlein A."/>
            <person name="Michel G."/>
            <person name="Wedler H."/>
            <person name="Koehrer K."/>
            <person name="Ottenwaelder B."/>
            <person name="Poustka A."/>
            <person name="Wiemann S."/>
            <person name="Schupp I."/>
        </authorList>
    </citation>
    <scope>NUCLEOTIDE SEQUENCE [LARGE SCALE MRNA]</scope>
    <source>
        <tissue>Fetal kidney</tissue>
    </source>
</reference>
<reference key="3">
    <citation type="journal article" date="2004" name="Genome Res.">
        <title>The status, quality, and expansion of the NIH full-length cDNA project: the Mammalian Gene Collection (MGC).</title>
        <authorList>
            <consortium name="The MGC Project Team"/>
        </authorList>
    </citation>
    <scope>NUCLEOTIDE SEQUENCE [LARGE SCALE MRNA]</scope>
    <source>
        <tissue>Placenta</tissue>
    </source>
</reference>
<reference key="4">
    <citation type="journal article" date="2020" name="J. Biol. Chem.">
        <title>The magnesium transporter NIPAL1 is a pancreatic islet-expressed protein that conditionally impacts insulin secretion.</title>
        <authorList>
            <person name="Manialawy Y."/>
            <person name="Khan S.R."/>
            <person name="Bhattacharjee A."/>
            <person name="Wheeler M.B."/>
        </authorList>
    </citation>
    <scope>TISSUE SPECIFICITY</scope>
</reference>